<comment type="function">
    <text evidence="1">Part of the Rad50/Mre11 complex, which is involved in the early steps of DNA double-strand break (DSB) repair. The complex may facilitate opening of the processed DNA ends to aid in the recruitment of HerA and NurA. Rad50 controls the balance between DNA end bridging and DNA resection via ATP-dependent structural rearrangements of the Rad50/Mre11 complex.</text>
</comment>
<comment type="cofactor">
    <cofactor evidence="1">
        <name>Zn(2+)</name>
        <dbReference type="ChEBI" id="CHEBI:29105"/>
    </cofactor>
    <text evidence="1">Binds 1 zinc ion per homodimer.</text>
</comment>
<comment type="subunit">
    <text evidence="1">Homodimer. Forms a heterotetramer composed of two Mre11 subunits and two Rad50 subunits.</text>
</comment>
<comment type="domain">
    <text evidence="1">The two conserved Cys that bind zinc constitute the zinc-hook, which separates the large intramolecular coiled coil regions. The 2 Cys residues coordinate one molecule of zinc with the help of the 2 Cys residues of the zinc-hook of another Rad50 molecule, thereby forming a V-shaped homodimer.</text>
</comment>
<comment type="similarity">
    <text evidence="3">Belongs to the SMC family. RAD50 subfamily.</text>
</comment>
<accession>P62135</accession>
<sequence>MVIVKKVILNNVKTHSKREFDFEKGINLILGPNGSGKTTLVESIFLALFGGDFARVIDYFKKGEKTMAITLILEDKGKTYRIRRKWVLENNAKLVESSLELIDTIPKKLASDHNKLLQQIKHLFGLDKKIIPLIYYKQNEITKIIEMDPRKRKEWFDEILGIKDLEEFSEKLKMAIKLIKTGKISRIEDRIKLLKAELNKKSLLENKLKNYKEKLVLLSNELENLEKEYKILENQYKEYLELKAKLKSIEGQINNINVKEIESKINNIREELNNIEELTDYEKDILSKKHEIIRCNEIKNRLKELEKEIKDYDKIKKEFLEIESKYKQYEEKRLEYEKAKMLEKEKEKAKREYSYLLKEKESLEKEIAELQNKINQIKELEKMEQELLEIQERIGVIKAKLKLLENIKDRCPLCGAKLSSDTIEHLQKEREKLQKEYYYLKEKYNQLLIKIRALEKYKGLEKVLEAKTKHLETIENRLKEIKPIIELEIPKIELDESIPYKYKQLLNKVSYLEAKIKEYERYKNIECPYDIAIEELKRIEDKYNKYIKKPALERELNLLLKELERYNSLLKEKEEILSKLNPEIETKYKELTKKKENLLSEISKVKGIIKEIESQIKEIEKHESTIKQLEEKKRKWEKLVEKLNRIVKALGRDGIPKALREGAINYINDMANIYLREFTDKYKLKVNNDLSIYAIPIDNPHYEIEAKNLSGGEKVVFSLSIALAIISWLSLQNMFMVLDEPTANLDNERTLALRKTFDKLEKMVEQAIIVTHNELLDTGENHVVRL</sequence>
<keyword id="KW-0067">ATP-binding</keyword>
<keyword id="KW-0175">Coiled coil</keyword>
<keyword id="KW-0227">DNA damage</keyword>
<keyword id="KW-0234">DNA repair</keyword>
<keyword id="KW-0378">Hydrolase</keyword>
<keyword id="KW-0479">Metal-binding</keyword>
<keyword id="KW-0547">Nucleotide-binding</keyword>
<keyword id="KW-1185">Reference proteome</keyword>
<keyword id="KW-0862">Zinc</keyword>
<evidence type="ECO:0000250" key="1">
    <source>
        <dbReference type="UniProtKB" id="P58301"/>
    </source>
</evidence>
<evidence type="ECO:0000255" key="2"/>
<evidence type="ECO:0000305" key="3"/>
<gene>
    <name evidence="1" type="primary">rad50</name>
    <name type="ordered locus">NEQ256</name>
</gene>
<dbReference type="EMBL" id="AE017199">
    <property type="protein sequence ID" value="AAR39107.1"/>
    <property type="molecule type" value="Genomic_DNA"/>
</dbReference>
<dbReference type="STRING" id="228908.NEQ256"/>
<dbReference type="EnsemblBacteria" id="AAR39107">
    <property type="protein sequence ID" value="AAR39107"/>
    <property type="gene ID" value="NEQ256"/>
</dbReference>
<dbReference type="KEGG" id="neq:NEQ256"/>
<dbReference type="HOGENOM" id="CLU_004785_0_2_2"/>
<dbReference type="Proteomes" id="UP000000578">
    <property type="component" value="Chromosome"/>
</dbReference>
<dbReference type="GO" id="GO:0005524">
    <property type="term" value="F:ATP binding"/>
    <property type="evidence" value="ECO:0007669"/>
    <property type="project" value="UniProtKB-KW"/>
</dbReference>
<dbReference type="GO" id="GO:0016887">
    <property type="term" value="F:ATP hydrolysis activity"/>
    <property type="evidence" value="ECO:0007669"/>
    <property type="project" value="InterPro"/>
</dbReference>
<dbReference type="GO" id="GO:0046872">
    <property type="term" value="F:metal ion binding"/>
    <property type="evidence" value="ECO:0007669"/>
    <property type="project" value="UniProtKB-KW"/>
</dbReference>
<dbReference type="GO" id="GO:0006302">
    <property type="term" value="P:double-strand break repair"/>
    <property type="evidence" value="ECO:0007669"/>
    <property type="project" value="InterPro"/>
</dbReference>
<dbReference type="Gene3D" id="1.10.287.510">
    <property type="entry name" value="Helix hairpin bin"/>
    <property type="match status" value="1"/>
</dbReference>
<dbReference type="Gene3D" id="3.40.50.300">
    <property type="entry name" value="P-loop containing nucleotide triphosphate hydrolases"/>
    <property type="match status" value="2"/>
</dbReference>
<dbReference type="InterPro" id="IPR027417">
    <property type="entry name" value="P-loop_NTPase"/>
</dbReference>
<dbReference type="InterPro" id="IPR038729">
    <property type="entry name" value="Rad50/SbcC_AAA"/>
</dbReference>
<dbReference type="PANTHER" id="PTHR32114">
    <property type="entry name" value="ABC TRANSPORTER ABCH.3"/>
    <property type="match status" value="1"/>
</dbReference>
<dbReference type="PANTHER" id="PTHR32114:SF2">
    <property type="entry name" value="ABC TRANSPORTER ABCH.3"/>
    <property type="match status" value="1"/>
</dbReference>
<dbReference type="Pfam" id="PF13476">
    <property type="entry name" value="AAA_23"/>
    <property type="match status" value="1"/>
</dbReference>
<dbReference type="SUPFAM" id="SSF52540">
    <property type="entry name" value="P-loop containing nucleoside triphosphate hydrolases"/>
    <property type="match status" value="1"/>
</dbReference>
<dbReference type="SUPFAM" id="SSF75712">
    <property type="entry name" value="Rad50 coiled-coil Zn hook"/>
    <property type="match status" value="1"/>
</dbReference>
<feature type="chain" id="PRO_0000138659" description="DNA double-strand break repair Rad50 ATPase">
    <location>
        <begin position="1"/>
        <end position="786"/>
    </location>
</feature>
<feature type="domain" description="Zinc-hook" evidence="3">
    <location>
        <begin position="366"/>
        <end position="459"/>
    </location>
</feature>
<feature type="coiled-coil region" evidence="2">
    <location>
        <begin position="194"/>
        <end position="249"/>
    </location>
</feature>
<feature type="coiled-coil region" evidence="2">
    <location>
        <begin position="337"/>
        <end position="455"/>
    </location>
</feature>
<feature type="coiled-coil region" evidence="2">
    <location>
        <begin position="551"/>
        <end position="650"/>
    </location>
</feature>
<feature type="binding site" evidence="1">
    <location>
        <position position="13"/>
    </location>
    <ligand>
        <name>ATP</name>
        <dbReference type="ChEBI" id="CHEBI:30616"/>
    </ligand>
</feature>
<feature type="binding site" evidence="1">
    <location>
        <begin position="33"/>
        <end position="39"/>
    </location>
    <ligand>
        <name>ATP</name>
        <dbReference type="ChEBI" id="CHEBI:30616"/>
    </ligand>
</feature>
<feature type="binding site" evidence="1">
    <location>
        <position position="138"/>
    </location>
    <ligand>
        <name>ATP</name>
        <dbReference type="ChEBI" id="CHEBI:30616"/>
    </ligand>
</feature>
<feature type="binding site" evidence="1">
    <location>
        <position position="411"/>
    </location>
    <ligand>
        <name>Zn(2+)</name>
        <dbReference type="ChEBI" id="CHEBI:29105"/>
    </ligand>
</feature>
<feature type="binding site" evidence="1">
    <location>
        <position position="414"/>
    </location>
    <ligand>
        <name>Zn(2+)</name>
        <dbReference type="ChEBI" id="CHEBI:29105"/>
    </ligand>
</feature>
<organism>
    <name type="scientific">Nanoarchaeum equitans (strain Kin4-M)</name>
    <dbReference type="NCBI Taxonomy" id="228908"/>
    <lineage>
        <taxon>Archaea</taxon>
        <taxon>Nanobdellota</taxon>
        <taxon>Candidatus Nanoarchaeia</taxon>
        <taxon>Nanoarchaeales</taxon>
        <taxon>Nanoarchaeaceae</taxon>
        <taxon>Nanoarchaeum</taxon>
    </lineage>
</organism>
<protein>
    <recommendedName>
        <fullName evidence="1">DNA double-strand break repair Rad50 ATPase</fullName>
    </recommendedName>
</protein>
<proteinExistence type="inferred from homology"/>
<reference key="1">
    <citation type="journal article" date="2003" name="Proc. Natl. Acad. Sci. U.S.A.">
        <title>The genome of Nanoarchaeum equitans: insights into early archaeal evolution and derived parasitism.</title>
        <authorList>
            <person name="Waters E."/>
            <person name="Hohn M.J."/>
            <person name="Ahel I."/>
            <person name="Graham D.E."/>
            <person name="Adams M.D."/>
            <person name="Barnstead M."/>
            <person name="Beeson K.Y."/>
            <person name="Bibbs L."/>
            <person name="Bolanos R."/>
            <person name="Keller M."/>
            <person name="Kretz K."/>
            <person name="Lin X."/>
            <person name="Mathur E."/>
            <person name="Ni J."/>
            <person name="Podar M."/>
            <person name="Richardson T."/>
            <person name="Sutton G.G."/>
            <person name="Simon M."/>
            <person name="Soell D."/>
            <person name="Stetter K.O."/>
            <person name="Short J.M."/>
            <person name="Noorderwier M."/>
        </authorList>
    </citation>
    <scope>NUCLEOTIDE SEQUENCE [LARGE SCALE GENOMIC DNA]</scope>
    <source>
        <strain>Kin4-M</strain>
    </source>
</reference>
<name>RAD50_NANEQ</name>